<dbReference type="EC" id="2.8.1.4" evidence="1"/>
<dbReference type="EMBL" id="CP000312">
    <property type="protein sequence ID" value="ABG87862.1"/>
    <property type="molecule type" value="Genomic_DNA"/>
</dbReference>
<dbReference type="RefSeq" id="WP_011592368.1">
    <property type="nucleotide sequence ID" value="NC_008262.1"/>
</dbReference>
<dbReference type="SMR" id="Q0ST36"/>
<dbReference type="KEGG" id="cpr:CPR_1402"/>
<dbReference type="UniPathway" id="UPA00060"/>
<dbReference type="Proteomes" id="UP000001824">
    <property type="component" value="Chromosome"/>
</dbReference>
<dbReference type="GO" id="GO:0005829">
    <property type="term" value="C:cytosol"/>
    <property type="evidence" value="ECO:0007669"/>
    <property type="project" value="TreeGrafter"/>
</dbReference>
<dbReference type="GO" id="GO:0005524">
    <property type="term" value="F:ATP binding"/>
    <property type="evidence" value="ECO:0007669"/>
    <property type="project" value="UniProtKB-UniRule"/>
</dbReference>
<dbReference type="GO" id="GO:0004810">
    <property type="term" value="F:CCA tRNA nucleotidyltransferase activity"/>
    <property type="evidence" value="ECO:0007669"/>
    <property type="project" value="InterPro"/>
</dbReference>
<dbReference type="GO" id="GO:0000049">
    <property type="term" value="F:tRNA binding"/>
    <property type="evidence" value="ECO:0007669"/>
    <property type="project" value="UniProtKB-UniRule"/>
</dbReference>
<dbReference type="GO" id="GO:0140741">
    <property type="term" value="F:tRNA-uracil-4 sulfurtransferase activity"/>
    <property type="evidence" value="ECO:0007669"/>
    <property type="project" value="UniProtKB-EC"/>
</dbReference>
<dbReference type="GO" id="GO:0009228">
    <property type="term" value="P:thiamine biosynthetic process"/>
    <property type="evidence" value="ECO:0007669"/>
    <property type="project" value="UniProtKB-KW"/>
</dbReference>
<dbReference type="GO" id="GO:0009229">
    <property type="term" value="P:thiamine diphosphate biosynthetic process"/>
    <property type="evidence" value="ECO:0007669"/>
    <property type="project" value="UniProtKB-UniRule"/>
</dbReference>
<dbReference type="GO" id="GO:0052837">
    <property type="term" value="P:thiazole biosynthetic process"/>
    <property type="evidence" value="ECO:0007669"/>
    <property type="project" value="TreeGrafter"/>
</dbReference>
<dbReference type="GO" id="GO:0002937">
    <property type="term" value="P:tRNA 4-thiouridine biosynthesis"/>
    <property type="evidence" value="ECO:0007669"/>
    <property type="project" value="TreeGrafter"/>
</dbReference>
<dbReference type="CDD" id="cd01712">
    <property type="entry name" value="PPase_ThiI"/>
    <property type="match status" value="1"/>
</dbReference>
<dbReference type="CDD" id="cd11716">
    <property type="entry name" value="THUMP_ThiI"/>
    <property type="match status" value="1"/>
</dbReference>
<dbReference type="FunFam" id="3.40.50.620:FF:000053">
    <property type="entry name" value="Probable tRNA sulfurtransferase"/>
    <property type="match status" value="1"/>
</dbReference>
<dbReference type="Gene3D" id="3.30.2130.30">
    <property type="match status" value="1"/>
</dbReference>
<dbReference type="Gene3D" id="3.40.50.620">
    <property type="entry name" value="HUPs"/>
    <property type="match status" value="1"/>
</dbReference>
<dbReference type="HAMAP" id="MF_00021">
    <property type="entry name" value="ThiI"/>
    <property type="match status" value="1"/>
</dbReference>
<dbReference type="InterPro" id="IPR014729">
    <property type="entry name" value="Rossmann-like_a/b/a_fold"/>
</dbReference>
<dbReference type="InterPro" id="IPR020536">
    <property type="entry name" value="ThiI_AANH"/>
</dbReference>
<dbReference type="InterPro" id="IPR054173">
    <property type="entry name" value="ThiI_fer"/>
</dbReference>
<dbReference type="InterPro" id="IPR049961">
    <property type="entry name" value="ThiI_N"/>
</dbReference>
<dbReference type="InterPro" id="IPR004114">
    <property type="entry name" value="THUMP_dom"/>
</dbReference>
<dbReference type="InterPro" id="IPR049962">
    <property type="entry name" value="THUMP_ThiI"/>
</dbReference>
<dbReference type="InterPro" id="IPR003720">
    <property type="entry name" value="tRNA_STrfase"/>
</dbReference>
<dbReference type="InterPro" id="IPR050102">
    <property type="entry name" value="tRNA_sulfurtransferase_ThiI"/>
</dbReference>
<dbReference type="NCBIfam" id="TIGR00342">
    <property type="entry name" value="tRNA uracil 4-sulfurtransferase ThiI"/>
    <property type="match status" value="1"/>
</dbReference>
<dbReference type="PANTHER" id="PTHR43209">
    <property type="entry name" value="TRNA SULFURTRANSFERASE"/>
    <property type="match status" value="1"/>
</dbReference>
<dbReference type="PANTHER" id="PTHR43209:SF1">
    <property type="entry name" value="TRNA SULFURTRANSFERASE"/>
    <property type="match status" value="1"/>
</dbReference>
<dbReference type="Pfam" id="PF02568">
    <property type="entry name" value="ThiI"/>
    <property type="match status" value="1"/>
</dbReference>
<dbReference type="Pfam" id="PF22025">
    <property type="entry name" value="ThiI_fer"/>
    <property type="match status" value="1"/>
</dbReference>
<dbReference type="Pfam" id="PF02926">
    <property type="entry name" value="THUMP"/>
    <property type="match status" value="1"/>
</dbReference>
<dbReference type="SMART" id="SM00981">
    <property type="entry name" value="THUMP"/>
    <property type="match status" value="1"/>
</dbReference>
<dbReference type="SUPFAM" id="SSF52402">
    <property type="entry name" value="Adenine nucleotide alpha hydrolases-like"/>
    <property type="match status" value="1"/>
</dbReference>
<dbReference type="SUPFAM" id="SSF143437">
    <property type="entry name" value="THUMP domain-like"/>
    <property type="match status" value="1"/>
</dbReference>
<dbReference type="PROSITE" id="PS51165">
    <property type="entry name" value="THUMP"/>
    <property type="match status" value="1"/>
</dbReference>
<accession>Q0ST36</accession>
<keyword id="KW-0067">ATP-binding</keyword>
<keyword id="KW-0963">Cytoplasm</keyword>
<keyword id="KW-0547">Nucleotide-binding</keyword>
<keyword id="KW-0694">RNA-binding</keyword>
<keyword id="KW-0784">Thiamine biosynthesis</keyword>
<keyword id="KW-0808">Transferase</keyword>
<keyword id="KW-0820">tRNA-binding</keyword>
<proteinExistence type="inferred from homology"/>
<organism>
    <name type="scientific">Clostridium perfringens (strain SM101 / Type A)</name>
    <dbReference type="NCBI Taxonomy" id="289380"/>
    <lineage>
        <taxon>Bacteria</taxon>
        <taxon>Bacillati</taxon>
        <taxon>Bacillota</taxon>
        <taxon>Clostridia</taxon>
        <taxon>Eubacteriales</taxon>
        <taxon>Clostridiaceae</taxon>
        <taxon>Clostridium</taxon>
    </lineage>
</organism>
<comment type="function">
    <text evidence="1">Catalyzes the ATP-dependent transfer of a sulfur to tRNA to produce 4-thiouridine in position 8 of tRNAs, which functions as a near-UV photosensor. Also catalyzes the transfer of sulfur to the sulfur carrier protein ThiS, forming ThiS-thiocarboxylate. This is a step in the synthesis of thiazole, in the thiamine biosynthesis pathway. The sulfur is donated as persulfide by IscS.</text>
</comment>
<comment type="catalytic activity">
    <reaction evidence="1">
        <text>[ThiI sulfur-carrier protein]-S-sulfanyl-L-cysteine + a uridine in tRNA + 2 reduced [2Fe-2S]-[ferredoxin] + ATP + H(+) = [ThiI sulfur-carrier protein]-L-cysteine + a 4-thiouridine in tRNA + 2 oxidized [2Fe-2S]-[ferredoxin] + AMP + diphosphate</text>
        <dbReference type="Rhea" id="RHEA:24176"/>
        <dbReference type="Rhea" id="RHEA-COMP:10000"/>
        <dbReference type="Rhea" id="RHEA-COMP:10001"/>
        <dbReference type="Rhea" id="RHEA-COMP:13337"/>
        <dbReference type="Rhea" id="RHEA-COMP:13338"/>
        <dbReference type="Rhea" id="RHEA-COMP:13339"/>
        <dbReference type="Rhea" id="RHEA-COMP:13340"/>
        <dbReference type="ChEBI" id="CHEBI:15378"/>
        <dbReference type="ChEBI" id="CHEBI:29950"/>
        <dbReference type="ChEBI" id="CHEBI:30616"/>
        <dbReference type="ChEBI" id="CHEBI:33019"/>
        <dbReference type="ChEBI" id="CHEBI:33737"/>
        <dbReference type="ChEBI" id="CHEBI:33738"/>
        <dbReference type="ChEBI" id="CHEBI:61963"/>
        <dbReference type="ChEBI" id="CHEBI:65315"/>
        <dbReference type="ChEBI" id="CHEBI:136798"/>
        <dbReference type="ChEBI" id="CHEBI:456215"/>
        <dbReference type="EC" id="2.8.1.4"/>
    </reaction>
</comment>
<comment type="catalytic activity">
    <reaction evidence="1">
        <text>[ThiS sulfur-carrier protein]-C-terminal Gly-Gly-AMP + S-sulfanyl-L-cysteinyl-[cysteine desulfurase] + AH2 = [ThiS sulfur-carrier protein]-C-terminal-Gly-aminoethanethioate + L-cysteinyl-[cysteine desulfurase] + A + AMP + 2 H(+)</text>
        <dbReference type="Rhea" id="RHEA:43340"/>
        <dbReference type="Rhea" id="RHEA-COMP:12157"/>
        <dbReference type="Rhea" id="RHEA-COMP:12158"/>
        <dbReference type="Rhea" id="RHEA-COMP:12910"/>
        <dbReference type="Rhea" id="RHEA-COMP:19908"/>
        <dbReference type="ChEBI" id="CHEBI:13193"/>
        <dbReference type="ChEBI" id="CHEBI:15378"/>
        <dbReference type="ChEBI" id="CHEBI:17499"/>
        <dbReference type="ChEBI" id="CHEBI:29950"/>
        <dbReference type="ChEBI" id="CHEBI:61963"/>
        <dbReference type="ChEBI" id="CHEBI:90618"/>
        <dbReference type="ChEBI" id="CHEBI:232372"/>
        <dbReference type="ChEBI" id="CHEBI:456215"/>
    </reaction>
</comment>
<comment type="pathway">
    <text evidence="1">Cofactor biosynthesis; thiamine diphosphate biosynthesis.</text>
</comment>
<comment type="subcellular location">
    <subcellularLocation>
        <location evidence="1">Cytoplasm</location>
    </subcellularLocation>
</comment>
<comment type="similarity">
    <text evidence="1">Belongs to the ThiI family.</text>
</comment>
<reference key="1">
    <citation type="journal article" date="2006" name="Genome Res.">
        <title>Skewed genomic variability in strains of the toxigenic bacterial pathogen, Clostridium perfringens.</title>
        <authorList>
            <person name="Myers G.S.A."/>
            <person name="Rasko D.A."/>
            <person name="Cheung J.K."/>
            <person name="Ravel J."/>
            <person name="Seshadri R."/>
            <person name="DeBoy R.T."/>
            <person name="Ren Q."/>
            <person name="Varga J."/>
            <person name="Awad M.M."/>
            <person name="Brinkac L.M."/>
            <person name="Daugherty S.C."/>
            <person name="Haft D.H."/>
            <person name="Dodson R.J."/>
            <person name="Madupu R."/>
            <person name="Nelson W.C."/>
            <person name="Rosovitz M.J."/>
            <person name="Sullivan S.A."/>
            <person name="Khouri H."/>
            <person name="Dimitrov G.I."/>
            <person name="Watkins K.L."/>
            <person name="Mulligan S."/>
            <person name="Benton J."/>
            <person name="Radune D."/>
            <person name="Fisher D.J."/>
            <person name="Atkins H.S."/>
            <person name="Hiscox T."/>
            <person name="Jost B.H."/>
            <person name="Billington S.J."/>
            <person name="Songer J.G."/>
            <person name="McClane B.A."/>
            <person name="Titball R.W."/>
            <person name="Rood J.I."/>
            <person name="Melville S.B."/>
            <person name="Paulsen I.T."/>
        </authorList>
    </citation>
    <scope>NUCLEOTIDE SEQUENCE [LARGE SCALE GENOMIC DNA]</scope>
    <source>
        <strain>SM101 / Type A</strain>
    </source>
</reference>
<sequence>MNNLILVKYASEIFLKGLNKNKFERKLKENIRKKLKDIDHEFITDQNRWFIKSEDLDGVIERVKKVFGVKELCLVTQVTGDFNSIKEEGLKKIKESKAKSFKVETNRANKKFPMNSMEVSRAVGGYILSELGDEIEVDIHNPECKLYVEIRGNAYVFTDKDKIKAVGGLPYGMNGSTMVMLSGGIDSPVAAYLMARRGVETHCVYYHSHPYTSERAKDKVKELAKIVGRYTEKITLYVVPFTEIQMDIIEKCREDELTIIMRRFMMRVACELSERKKIQSITTGESIGQVASQTMEGLMVSNDVSDRPVFRPLIAMDKEDIMDIARDIDTYDTSILPYEDCCTIFVPKHPKTKPRVKDMIIAERKLDIEALVNKAIDEMETFIFE</sequence>
<feature type="chain" id="PRO_1000074216" description="Probable tRNA sulfurtransferase">
    <location>
        <begin position="1"/>
        <end position="385"/>
    </location>
</feature>
<feature type="domain" description="THUMP" evidence="1">
    <location>
        <begin position="57"/>
        <end position="160"/>
    </location>
</feature>
<feature type="binding site" evidence="1">
    <location>
        <begin position="180"/>
        <end position="181"/>
    </location>
    <ligand>
        <name>ATP</name>
        <dbReference type="ChEBI" id="CHEBI:30616"/>
    </ligand>
</feature>
<feature type="binding site" evidence="1">
    <location>
        <begin position="205"/>
        <end position="206"/>
    </location>
    <ligand>
        <name>ATP</name>
        <dbReference type="ChEBI" id="CHEBI:30616"/>
    </ligand>
</feature>
<feature type="binding site" evidence="1">
    <location>
        <position position="262"/>
    </location>
    <ligand>
        <name>ATP</name>
        <dbReference type="ChEBI" id="CHEBI:30616"/>
    </ligand>
</feature>
<feature type="binding site" evidence="1">
    <location>
        <position position="284"/>
    </location>
    <ligand>
        <name>ATP</name>
        <dbReference type="ChEBI" id="CHEBI:30616"/>
    </ligand>
</feature>
<feature type="binding site" evidence="1">
    <location>
        <position position="293"/>
    </location>
    <ligand>
        <name>ATP</name>
        <dbReference type="ChEBI" id="CHEBI:30616"/>
    </ligand>
</feature>
<protein>
    <recommendedName>
        <fullName evidence="1">Probable tRNA sulfurtransferase</fullName>
        <ecNumber evidence="1">2.8.1.4</ecNumber>
    </recommendedName>
    <alternativeName>
        <fullName evidence="1">Sulfur carrier protein ThiS sulfurtransferase</fullName>
    </alternativeName>
    <alternativeName>
        <fullName evidence="1">Thiamine biosynthesis protein ThiI</fullName>
    </alternativeName>
    <alternativeName>
        <fullName evidence="1">tRNA 4-thiouridine synthase</fullName>
    </alternativeName>
</protein>
<name>THII_CLOPS</name>
<gene>
    <name evidence="1" type="primary">thiI</name>
    <name type="ordered locus">CPR_1402</name>
</gene>
<evidence type="ECO:0000255" key="1">
    <source>
        <dbReference type="HAMAP-Rule" id="MF_00021"/>
    </source>
</evidence>